<dbReference type="EMBL" id="AL353822">
    <property type="protein sequence ID" value="CAB88637.1"/>
    <property type="status" value="ALT_SEQ"/>
    <property type="molecule type" value="Genomic_DNA"/>
</dbReference>
<dbReference type="EMBL" id="CM002240">
    <property type="protein sequence ID" value="ESA42564.1"/>
    <property type="molecule type" value="Genomic_DNA"/>
</dbReference>
<dbReference type="EMBL" id="CM002240">
    <property type="protein sequence ID" value="ESA42565.1"/>
    <property type="molecule type" value="Genomic_DNA"/>
</dbReference>
<dbReference type="PIR" id="T48798">
    <property type="entry name" value="T48798"/>
</dbReference>
<dbReference type="RefSeq" id="XP_011394518.1">
    <property type="nucleotide sequence ID" value="XM_011396216.1"/>
</dbReference>
<dbReference type="RefSeq" id="XP_011394519.1">
    <property type="nucleotide sequence ID" value="XM_011396217.1"/>
</dbReference>
<dbReference type="SMR" id="Q9P6U7"/>
<dbReference type="FunCoup" id="Q9P6U7">
    <property type="interactions" value="1026"/>
</dbReference>
<dbReference type="STRING" id="367110.Q9P6U7"/>
<dbReference type="MEROPS" id="T01.984"/>
<dbReference type="PaxDb" id="5141-EFNCRP00000004093"/>
<dbReference type="EnsemblFungi" id="ESA42564">
    <property type="protein sequence ID" value="ESA42564"/>
    <property type="gene ID" value="NCU01368"/>
</dbReference>
<dbReference type="EnsemblFungi" id="ESA42565">
    <property type="protein sequence ID" value="ESA42565"/>
    <property type="gene ID" value="NCU01368"/>
</dbReference>
<dbReference type="GeneID" id="3876867"/>
<dbReference type="KEGG" id="ncr:NCU01368"/>
<dbReference type="VEuPathDB" id="FungiDB:NCU01368"/>
<dbReference type="HOGENOM" id="CLU_035750_12_1_1"/>
<dbReference type="InParanoid" id="Q9P6U7"/>
<dbReference type="OrthoDB" id="268428at2759"/>
<dbReference type="Proteomes" id="UP000001805">
    <property type="component" value="Chromosome 2, Linkage Group V"/>
</dbReference>
<dbReference type="GO" id="GO:0005829">
    <property type="term" value="C:cytosol"/>
    <property type="evidence" value="ECO:0000318"/>
    <property type="project" value="GO_Central"/>
</dbReference>
<dbReference type="GO" id="GO:0005789">
    <property type="term" value="C:endoplasmic reticulum membrane"/>
    <property type="evidence" value="ECO:0007669"/>
    <property type="project" value="EnsemblFungi"/>
</dbReference>
<dbReference type="GO" id="GO:0005634">
    <property type="term" value="C:nucleus"/>
    <property type="evidence" value="ECO:0000318"/>
    <property type="project" value="GO_Central"/>
</dbReference>
<dbReference type="GO" id="GO:0019774">
    <property type="term" value="C:proteasome core complex, beta-subunit complex"/>
    <property type="evidence" value="ECO:0000250"/>
    <property type="project" value="UniProtKB"/>
</dbReference>
<dbReference type="GO" id="GO:0061133">
    <property type="term" value="F:endopeptidase activator activity"/>
    <property type="evidence" value="ECO:0007669"/>
    <property type="project" value="EnsemblFungi"/>
</dbReference>
<dbReference type="GO" id="GO:0010499">
    <property type="term" value="P:proteasomal ubiquitin-independent protein catabolic process"/>
    <property type="evidence" value="ECO:0007669"/>
    <property type="project" value="EnsemblFungi"/>
</dbReference>
<dbReference type="GO" id="GO:0043161">
    <property type="term" value="P:proteasome-mediated ubiquitin-dependent protein catabolic process"/>
    <property type="evidence" value="ECO:0000318"/>
    <property type="project" value="GO_Central"/>
</dbReference>
<dbReference type="CDD" id="cd03758">
    <property type="entry name" value="proteasome_beta_type_2"/>
    <property type="match status" value="1"/>
</dbReference>
<dbReference type="FunFam" id="3.60.20.10:FF:000008">
    <property type="entry name" value="Proteasome subunit beta type-4"/>
    <property type="match status" value="1"/>
</dbReference>
<dbReference type="Gene3D" id="3.60.20.10">
    <property type="entry name" value="Glutamine Phosphoribosylpyrophosphate, subunit 1, domain 1"/>
    <property type="match status" value="1"/>
</dbReference>
<dbReference type="InterPro" id="IPR029055">
    <property type="entry name" value="Ntn_hydrolases_N"/>
</dbReference>
<dbReference type="InterPro" id="IPR050115">
    <property type="entry name" value="Proteasome_alpha"/>
</dbReference>
<dbReference type="InterPro" id="IPR035206">
    <property type="entry name" value="Proteasome_beta2"/>
</dbReference>
<dbReference type="InterPro" id="IPR016050">
    <property type="entry name" value="Proteasome_bsu_CS"/>
</dbReference>
<dbReference type="InterPro" id="IPR001353">
    <property type="entry name" value="Proteasome_sua/b"/>
</dbReference>
<dbReference type="InterPro" id="IPR023333">
    <property type="entry name" value="Proteasome_suB-type"/>
</dbReference>
<dbReference type="PANTHER" id="PTHR11599">
    <property type="entry name" value="PROTEASOME SUBUNIT ALPHA/BETA"/>
    <property type="match status" value="1"/>
</dbReference>
<dbReference type="Pfam" id="PF00227">
    <property type="entry name" value="Proteasome"/>
    <property type="match status" value="1"/>
</dbReference>
<dbReference type="SUPFAM" id="SSF56235">
    <property type="entry name" value="N-terminal nucleophile aminohydrolases (Ntn hydrolases)"/>
    <property type="match status" value="1"/>
</dbReference>
<dbReference type="PROSITE" id="PS00854">
    <property type="entry name" value="PROTEASOME_BETA_1"/>
    <property type="match status" value="1"/>
</dbReference>
<dbReference type="PROSITE" id="PS51476">
    <property type="entry name" value="PROTEASOME_BETA_2"/>
    <property type="match status" value="1"/>
</dbReference>
<evidence type="ECO:0000250" key="1"/>
<evidence type="ECO:0000255" key="2">
    <source>
        <dbReference type="PROSITE-ProRule" id="PRU00809"/>
    </source>
</evidence>
<evidence type="ECO:0000305" key="3"/>
<name>PSB4_NEUCR</name>
<protein>
    <recommendedName>
        <fullName>Probable proteasome subunit beta type-4</fullName>
    </recommendedName>
    <alternativeName>
        <fullName>Proteosome catalytic beta subunit 4</fullName>
    </alternativeName>
</protein>
<sequence length="203" mass="22418">MEVLLGITGKDFTIIAASKAAMRGATILKASDDKTRSLNKHTLMAFSGEAGDTVQFAEYTQANAQLYSMRNGTDLSPSALANFVRGELATSLRSRKPYNVNLLLGGVDPITHKPSLYWLDYLASLAKVPYAAHGYAQYYCLSILDKHHHPDITLHQGIKLLNLCTDELKRRLPIDFKGMTVKAVTKDGIIDIEFDDDKVVKMA</sequence>
<gene>
    <name type="primary">pcb-4</name>
    <name type="ORF">15E6.60</name>
    <name type="ORF">NCU01368</name>
</gene>
<keyword id="KW-0963">Cytoplasm</keyword>
<keyword id="KW-0539">Nucleus</keyword>
<keyword id="KW-0647">Proteasome</keyword>
<keyword id="KW-1185">Reference proteome</keyword>
<reference key="1">
    <citation type="journal article" date="2003" name="Nucleic Acids Res.">
        <title>What's in the genome of a filamentous fungus? Analysis of the Neurospora genome sequence.</title>
        <authorList>
            <person name="Mannhaupt G."/>
            <person name="Montrone C."/>
            <person name="Haase D."/>
            <person name="Mewes H.-W."/>
            <person name="Aign V."/>
            <person name="Hoheisel J.D."/>
            <person name="Fartmann B."/>
            <person name="Nyakatura G."/>
            <person name="Kempken F."/>
            <person name="Maier J."/>
            <person name="Schulte U."/>
        </authorList>
    </citation>
    <scope>NUCLEOTIDE SEQUENCE [LARGE SCALE GENOMIC DNA]</scope>
    <source>
        <strain>ATCC 24698 / 74-OR23-1A / CBS 708.71 / DSM 1257 / FGSC 987</strain>
    </source>
</reference>
<reference key="2">
    <citation type="journal article" date="2003" name="Nature">
        <title>The genome sequence of the filamentous fungus Neurospora crassa.</title>
        <authorList>
            <person name="Galagan J.E."/>
            <person name="Calvo S.E."/>
            <person name="Borkovich K.A."/>
            <person name="Selker E.U."/>
            <person name="Read N.D."/>
            <person name="Jaffe D.B."/>
            <person name="FitzHugh W."/>
            <person name="Ma L.-J."/>
            <person name="Smirnov S."/>
            <person name="Purcell S."/>
            <person name="Rehman B."/>
            <person name="Elkins T."/>
            <person name="Engels R."/>
            <person name="Wang S."/>
            <person name="Nielsen C.B."/>
            <person name="Butler J."/>
            <person name="Endrizzi M."/>
            <person name="Qui D."/>
            <person name="Ianakiev P."/>
            <person name="Bell-Pedersen D."/>
            <person name="Nelson M.A."/>
            <person name="Werner-Washburne M."/>
            <person name="Selitrennikoff C.P."/>
            <person name="Kinsey J.A."/>
            <person name="Braun E.L."/>
            <person name="Zelter A."/>
            <person name="Schulte U."/>
            <person name="Kothe G.O."/>
            <person name="Jedd G."/>
            <person name="Mewes H.-W."/>
            <person name="Staben C."/>
            <person name="Marcotte E."/>
            <person name="Greenberg D."/>
            <person name="Roy A."/>
            <person name="Foley K."/>
            <person name="Naylor J."/>
            <person name="Stange-Thomann N."/>
            <person name="Barrett R."/>
            <person name="Gnerre S."/>
            <person name="Kamal M."/>
            <person name="Kamvysselis M."/>
            <person name="Mauceli E.W."/>
            <person name="Bielke C."/>
            <person name="Rudd S."/>
            <person name="Frishman D."/>
            <person name="Krystofova S."/>
            <person name="Rasmussen C."/>
            <person name="Metzenberg R.L."/>
            <person name="Perkins D.D."/>
            <person name="Kroken S."/>
            <person name="Cogoni C."/>
            <person name="Macino G."/>
            <person name="Catcheside D.E.A."/>
            <person name="Li W."/>
            <person name="Pratt R.J."/>
            <person name="Osmani S.A."/>
            <person name="DeSouza C.P.C."/>
            <person name="Glass N.L."/>
            <person name="Orbach M.J."/>
            <person name="Berglund J.A."/>
            <person name="Voelker R."/>
            <person name="Yarden O."/>
            <person name="Plamann M."/>
            <person name="Seiler S."/>
            <person name="Dunlap J.C."/>
            <person name="Radford A."/>
            <person name="Aramayo R."/>
            <person name="Natvig D.O."/>
            <person name="Alex L.A."/>
            <person name="Mannhaupt G."/>
            <person name="Ebbole D.J."/>
            <person name="Freitag M."/>
            <person name="Paulsen I."/>
            <person name="Sachs M.S."/>
            <person name="Lander E.S."/>
            <person name="Nusbaum C."/>
            <person name="Birren B.W."/>
        </authorList>
    </citation>
    <scope>NUCLEOTIDE SEQUENCE [LARGE SCALE GENOMIC DNA]</scope>
    <source>
        <strain>ATCC 24698 / 74-OR23-1A / CBS 708.71 / DSM 1257 / FGSC 987</strain>
    </source>
</reference>
<comment type="function">
    <text evidence="1">Non-catalytic component of the proteasome, a multicatalytic proteinase complex which is characterized by its ability to cleave peptides with Arg, Phe, Tyr, Leu, and Glu adjacent to the leaving group at neutral or slightly basic pH. The proteasome has an ATP-dependent proteolytic activity (By similarity).</text>
</comment>
<comment type="subunit">
    <text evidence="1">The 26S proteasome consists of a 20S proteasome core and two 19S regulatory subunits. The 20S proteasome core is composed of 28 subunits that are arranged in four stacked rings, resulting in a barrel-shaped structure. The two end rings are each formed by seven alpha subunits, and the two central rings are each formed by seven beta subunits. The catalytic chamber with the active sites is on the inside of the barrel (By similarity).</text>
</comment>
<comment type="subcellular location">
    <subcellularLocation>
        <location evidence="2">Cytoplasm</location>
    </subcellularLocation>
    <subcellularLocation>
        <location evidence="1">Nucleus</location>
    </subcellularLocation>
</comment>
<comment type="similarity">
    <text evidence="2">Belongs to the peptidase T1B family.</text>
</comment>
<comment type="sequence caution" evidence="3">
    <conflict type="erroneous gene model prediction">
        <sequence resource="EMBL-CDS" id="CAB88637"/>
    </conflict>
</comment>
<feature type="chain" id="PRO_0000148053" description="Probable proteasome subunit beta type-4">
    <location>
        <begin position="1"/>
        <end position="203"/>
    </location>
</feature>
<proteinExistence type="inferred from homology"/>
<organism>
    <name type="scientific">Neurospora crassa (strain ATCC 24698 / 74-OR23-1A / CBS 708.71 / DSM 1257 / FGSC 987)</name>
    <dbReference type="NCBI Taxonomy" id="367110"/>
    <lineage>
        <taxon>Eukaryota</taxon>
        <taxon>Fungi</taxon>
        <taxon>Dikarya</taxon>
        <taxon>Ascomycota</taxon>
        <taxon>Pezizomycotina</taxon>
        <taxon>Sordariomycetes</taxon>
        <taxon>Sordariomycetidae</taxon>
        <taxon>Sordariales</taxon>
        <taxon>Sordariaceae</taxon>
        <taxon>Neurospora</taxon>
    </lineage>
</organism>
<accession>Q9P6U7</accession>
<accession>Q7RV10</accession>
<accession>V5IN28</accession>